<protein>
    <recommendedName>
        <fullName evidence="1">UPF0412 protein YaaI</fullName>
    </recommendedName>
</protein>
<reference key="1">
    <citation type="journal article" date="2008" name="Genome Res.">
        <title>Comparative genome analysis of Salmonella enteritidis PT4 and Salmonella gallinarum 287/91 provides insights into evolutionary and host adaptation pathways.</title>
        <authorList>
            <person name="Thomson N.R."/>
            <person name="Clayton D.J."/>
            <person name="Windhorst D."/>
            <person name="Vernikos G."/>
            <person name="Davidson S."/>
            <person name="Churcher C."/>
            <person name="Quail M.A."/>
            <person name="Stevens M."/>
            <person name="Jones M.A."/>
            <person name="Watson M."/>
            <person name="Barron A."/>
            <person name="Layton A."/>
            <person name="Pickard D."/>
            <person name="Kingsley R.A."/>
            <person name="Bignell A."/>
            <person name="Clark L."/>
            <person name="Harris B."/>
            <person name="Ormond D."/>
            <person name="Abdellah Z."/>
            <person name="Brooks K."/>
            <person name="Cherevach I."/>
            <person name="Chillingworth T."/>
            <person name="Woodward J."/>
            <person name="Norberczak H."/>
            <person name="Lord A."/>
            <person name="Arrowsmith C."/>
            <person name="Jagels K."/>
            <person name="Moule S."/>
            <person name="Mungall K."/>
            <person name="Saunders M."/>
            <person name="Whitehead S."/>
            <person name="Chabalgoity J.A."/>
            <person name="Maskell D."/>
            <person name="Humphreys T."/>
            <person name="Roberts M."/>
            <person name="Barrow P.A."/>
            <person name="Dougan G."/>
            <person name="Parkhill J."/>
        </authorList>
    </citation>
    <scope>NUCLEOTIDE SEQUENCE [LARGE SCALE GENOMIC DNA]</scope>
    <source>
        <strain>P125109</strain>
    </source>
</reference>
<accession>B5R5I1</accession>
<evidence type="ECO:0000255" key="1">
    <source>
        <dbReference type="HAMAP-Rule" id="MF_01372"/>
    </source>
</evidence>
<dbReference type="EMBL" id="AM933172">
    <property type="protein sequence ID" value="CAR31601.1"/>
    <property type="molecule type" value="Genomic_DNA"/>
</dbReference>
<dbReference type="RefSeq" id="WP_001258084.1">
    <property type="nucleotide sequence ID" value="NC_011294.1"/>
</dbReference>
<dbReference type="KEGG" id="set:SEN0010"/>
<dbReference type="HOGENOM" id="CLU_158661_0_0_6"/>
<dbReference type="Proteomes" id="UP000000613">
    <property type="component" value="Chromosome"/>
</dbReference>
<dbReference type="HAMAP" id="MF_01372">
    <property type="entry name" value="UPF0412"/>
    <property type="match status" value="1"/>
</dbReference>
<dbReference type="InterPro" id="IPR020240">
    <property type="entry name" value="UPF0412_YaaI"/>
</dbReference>
<dbReference type="NCBIfam" id="NF007541">
    <property type="entry name" value="PRK10154.1"/>
    <property type="match status" value="1"/>
</dbReference>
<dbReference type="Pfam" id="PF10807">
    <property type="entry name" value="DUF2541"/>
    <property type="match status" value="1"/>
</dbReference>
<gene>
    <name evidence="1" type="primary">yaaI</name>
    <name type="ordered locus">SEN0010</name>
</gene>
<proteinExistence type="inferred from homology"/>
<name>YAAI_SALEP</name>
<organism>
    <name type="scientific">Salmonella enteritidis PT4 (strain P125109)</name>
    <dbReference type="NCBI Taxonomy" id="550537"/>
    <lineage>
        <taxon>Bacteria</taxon>
        <taxon>Pseudomonadati</taxon>
        <taxon>Pseudomonadota</taxon>
        <taxon>Gammaproteobacteria</taxon>
        <taxon>Enterobacterales</taxon>
        <taxon>Enterobacteriaceae</taxon>
        <taxon>Salmonella</taxon>
    </lineage>
</organism>
<sequence length="134" mass="14406">MRSVLTISAGLLFGLALSSVAHANDHKILGVIAMPRNETNDLALKIPVCRIVKRIQLTADHGDIELSGASVYFKTARSASQSLNVPSSIKEGQTTGWININSDNDNKRCVSKITFSGHTVNSSDMARLKVIGDD</sequence>
<comment type="similarity">
    <text evidence="1">Belongs to the UPF0412 family.</text>
</comment>
<feature type="signal peptide" evidence="1">
    <location>
        <begin position="1"/>
        <end position="23"/>
    </location>
</feature>
<feature type="chain" id="PRO_1000144743" description="UPF0412 protein YaaI">
    <location>
        <begin position="24"/>
        <end position="134"/>
    </location>
</feature>
<keyword id="KW-0732">Signal</keyword>